<name>RAB6A_CHICK</name>
<feature type="initiator methionine" description="Removed" evidence="1">
    <location>
        <position position="1"/>
    </location>
</feature>
<feature type="chain" id="PRO_0000260745" description="Ras-related protein Rab-6A">
    <location>
        <begin position="2"/>
        <end position="208"/>
    </location>
</feature>
<feature type="short sequence motif" description="Switch 1" evidence="2">
    <location>
        <begin position="32"/>
        <end position="50"/>
    </location>
</feature>
<feature type="short sequence motif" description="Switch 2" evidence="2">
    <location>
        <begin position="69"/>
        <end position="88"/>
    </location>
</feature>
<feature type="binding site" evidence="2">
    <location>
        <position position="23"/>
    </location>
    <ligand>
        <name>GTP</name>
        <dbReference type="ChEBI" id="CHEBI:37565"/>
    </ligand>
</feature>
<feature type="binding site" evidence="2">
    <location>
        <position position="24"/>
    </location>
    <ligand>
        <name>GTP</name>
        <dbReference type="ChEBI" id="CHEBI:37565"/>
    </ligand>
</feature>
<feature type="binding site" evidence="2">
    <location>
        <position position="25"/>
    </location>
    <ligand>
        <name>GTP</name>
        <dbReference type="ChEBI" id="CHEBI:37565"/>
    </ligand>
</feature>
<feature type="binding site" evidence="2">
    <location>
        <position position="26"/>
    </location>
    <ligand>
        <name>GTP</name>
        <dbReference type="ChEBI" id="CHEBI:37565"/>
    </ligand>
</feature>
<feature type="binding site" evidence="2">
    <location>
        <position position="27"/>
    </location>
    <ligand>
        <name>GTP</name>
        <dbReference type="ChEBI" id="CHEBI:37565"/>
    </ligand>
</feature>
<feature type="binding site" evidence="2">
    <location>
        <position position="27"/>
    </location>
    <ligand>
        <name>Mg(2+)</name>
        <dbReference type="ChEBI" id="CHEBI:18420"/>
    </ligand>
</feature>
<feature type="binding site" evidence="2">
    <location>
        <position position="28"/>
    </location>
    <ligand>
        <name>GTP</name>
        <dbReference type="ChEBI" id="CHEBI:37565"/>
    </ligand>
</feature>
<feature type="binding site" evidence="2">
    <location>
        <position position="39"/>
    </location>
    <ligand>
        <name>GTP</name>
        <dbReference type="ChEBI" id="CHEBI:37565"/>
    </ligand>
</feature>
<feature type="binding site" evidence="2">
    <location>
        <position position="40"/>
    </location>
    <ligand>
        <name>GTP</name>
        <dbReference type="ChEBI" id="CHEBI:37565"/>
    </ligand>
</feature>
<feature type="binding site" evidence="2">
    <location>
        <position position="42"/>
    </location>
    <ligand>
        <name>GTP</name>
        <dbReference type="ChEBI" id="CHEBI:37565"/>
    </ligand>
</feature>
<feature type="binding site" evidence="2">
    <location>
        <position position="45"/>
    </location>
    <ligand>
        <name>GTP</name>
        <dbReference type="ChEBI" id="CHEBI:37565"/>
    </ligand>
</feature>
<feature type="binding site" evidence="2">
    <location>
        <position position="45"/>
    </location>
    <ligand>
        <name>Mg(2+)</name>
        <dbReference type="ChEBI" id="CHEBI:18420"/>
    </ligand>
</feature>
<feature type="binding site" evidence="2">
    <location>
        <position position="68"/>
    </location>
    <ligand>
        <name>Mg(2+)</name>
        <dbReference type="ChEBI" id="CHEBI:18420"/>
    </ligand>
</feature>
<feature type="binding site" evidence="2">
    <location>
        <position position="71"/>
    </location>
    <ligand>
        <name>GTP</name>
        <dbReference type="ChEBI" id="CHEBI:37565"/>
    </ligand>
</feature>
<feature type="binding site" evidence="2">
    <location>
        <position position="126"/>
    </location>
    <ligand>
        <name>GTP</name>
        <dbReference type="ChEBI" id="CHEBI:37565"/>
    </ligand>
</feature>
<feature type="binding site" evidence="2">
    <location>
        <position position="127"/>
    </location>
    <ligand>
        <name>GTP</name>
        <dbReference type="ChEBI" id="CHEBI:37565"/>
    </ligand>
</feature>
<feature type="binding site" evidence="2">
    <location>
        <position position="129"/>
    </location>
    <ligand>
        <name>GTP</name>
        <dbReference type="ChEBI" id="CHEBI:37565"/>
    </ligand>
</feature>
<feature type="binding site" evidence="2">
    <location>
        <position position="156"/>
    </location>
    <ligand>
        <name>GTP</name>
        <dbReference type="ChEBI" id="CHEBI:37565"/>
    </ligand>
</feature>
<feature type="binding site" evidence="2">
    <location>
        <position position="157"/>
    </location>
    <ligand>
        <name>GTP</name>
        <dbReference type="ChEBI" id="CHEBI:37565"/>
    </ligand>
</feature>
<feature type="binding site" evidence="2">
    <location>
        <position position="158"/>
    </location>
    <ligand>
        <name>GTP</name>
        <dbReference type="ChEBI" id="CHEBI:37565"/>
    </ligand>
</feature>
<feature type="modified residue" description="N-acetylserine" evidence="1">
    <location>
        <position position="2"/>
    </location>
</feature>
<feature type="modified residue" description="Cysteine methyl ester" evidence="1">
    <location>
        <position position="208"/>
    </location>
</feature>
<feature type="lipid moiety-binding region" description="S-geranylgeranyl cysteine" evidence="1">
    <location>
        <position position="206"/>
    </location>
</feature>
<feature type="lipid moiety-binding region" description="S-geranylgeranyl cysteine" evidence="1">
    <location>
        <position position="208"/>
    </location>
</feature>
<proteinExistence type="evidence at transcript level"/>
<gene>
    <name type="primary">RAB6A</name>
</gene>
<reference key="1">
    <citation type="submission" date="2006-03" db="EMBL/GenBank/DDBJ databases">
        <title>Cloning and sequence analysis of the chicken RAB6 gene.</title>
        <authorList>
            <person name="Dong B."/>
            <person name="Meng H."/>
            <person name="Gu Z.L."/>
            <person name="Gong D.Q."/>
        </authorList>
    </citation>
    <scope>NUCLEOTIDE SEQUENCE [MRNA]</scope>
    <source>
        <tissue>Adipose tissue</tissue>
    </source>
</reference>
<comment type="function">
    <text evidence="2">The small GTPases Rab are key regulators of intracellular membrane trafficking, from the formation of transport vesicles to their fusion with membranes. Rabs cycle between an inactive GDP-bound form and an active GTP-bound form that is able to recruit to membranes different sets of downstream effectors directly responsible for vesicle formation, movement, tethering and fusion. RAB6A acts as a regulator of COPI-independent retrograde transport from the Golgi apparatus towards the endoplasmic reticulum (ER).</text>
</comment>
<comment type="catalytic activity">
    <reaction evidence="2">
        <text>GTP + H2O = GDP + phosphate + H(+)</text>
        <dbReference type="Rhea" id="RHEA:19669"/>
        <dbReference type="ChEBI" id="CHEBI:15377"/>
        <dbReference type="ChEBI" id="CHEBI:15378"/>
        <dbReference type="ChEBI" id="CHEBI:37565"/>
        <dbReference type="ChEBI" id="CHEBI:43474"/>
        <dbReference type="ChEBI" id="CHEBI:58189"/>
        <dbReference type="EC" id="3.6.5.2"/>
    </reaction>
    <physiologicalReaction direction="left-to-right" evidence="2">
        <dbReference type="Rhea" id="RHEA:19670"/>
    </physiologicalReaction>
</comment>
<comment type="cofactor">
    <cofactor evidence="2">
        <name>Mg(2+)</name>
        <dbReference type="ChEBI" id="CHEBI:18420"/>
    </cofactor>
</comment>
<comment type="activity regulation">
    <text evidence="2">Regulated by guanine nucleotide exchange factors (GEFs) which promote the exchange of bound GDP for free GTP. Regulated by GTPase activating proteins (GAPs) which increase the GTP hydrolysis activity. Inhibited by GDP dissociation inhibitors (GDIs).</text>
</comment>
<comment type="subcellular location">
    <subcellularLocation>
        <location evidence="2">Golgi apparatus membrane</location>
        <topology evidence="2">Lipid-anchor</topology>
    </subcellularLocation>
</comment>
<comment type="domain">
    <text evidence="2">Switch 1, switch 2 and the interswitch regions are characteristic of Rab GTPases and mediate the interactions with Rab downstream effectors. The switch regions undergo conformational changes upon nucleotide binding which drives interaction with specific sets of effector proteins, with most effectors only binding to GTP-bound Rab.</text>
</comment>
<comment type="similarity">
    <text evidence="3">Belongs to the small GTPase superfamily. Rab family.</text>
</comment>
<keyword id="KW-0007">Acetylation</keyword>
<keyword id="KW-0931">ER-Golgi transport</keyword>
<keyword id="KW-0333">Golgi apparatus</keyword>
<keyword id="KW-0342">GTP-binding</keyword>
<keyword id="KW-0378">Hydrolase</keyword>
<keyword id="KW-0449">Lipoprotein</keyword>
<keyword id="KW-0460">Magnesium</keyword>
<keyword id="KW-0472">Membrane</keyword>
<keyword id="KW-0479">Metal-binding</keyword>
<keyword id="KW-0488">Methylation</keyword>
<keyword id="KW-0547">Nucleotide-binding</keyword>
<keyword id="KW-0636">Prenylation</keyword>
<keyword id="KW-0653">Protein transport</keyword>
<keyword id="KW-1185">Reference proteome</keyword>
<keyword id="KW-0813">Transport</keyword>
<evidence type="ECO:0000250" key="1"/>
<evidence type="ECO:0000250" key="2">
    <source>
        <dbReference type="UniProtKB" id="P20340"/>
    </source>
</evidence>
<evidence type="ECO:0000305" key="3"/>
<sequence>MSAGGDFGNPLRKFKLVFLGEQSVGKTSLITRFMYDSFDNTYQATIGIDFLSKTMYLEDRTIRLQLWDTAGQERFRSLIPSYIRDSAAAVVVYDITNVNSFQQTTKWIDDVRTERGSDVIIMLVGNKTDLADKRQVSIEEGERKAKELNVMFIETSAKAGYNVKQLFRRVAAALPGMESTQDKSREDMIDIKLEKPQEQPVSEGGCSC</sequence>
<organism>
    <name type="scientific">Gallus gallus</name>
    <name type="common">Chicken</name>
    <dbReference type="NCBI Taxonomy" id="9031"/>
    <lineage>
        <taxon>Eukaryota</taxon>
        <taxon>Metazoa</taxon>
        <taxon>Chordata</taxon>
        <taxon>Craniata</taxon>
        <taxon>Vertebrata</taxon>
        <taxon>Euteleostomi</taxon>
        <taxon>Archelosauria</taxon>
        <taxon>Archosauria</taxon>
        <taxon>Dinosauria</taxon>
        <taxon>Saurischia</taxon>
        <taxon>Theropoda</taxon>
        <taxon>Coelurosauria</taxon>
        <taxon>Aves</taxon>
        <taxon>Neognathae</taxon>
        <taxon>Galloanserae</taxon>
        <taxon>Galliformes</taxon>
        <taxon>Phasianidae</taxon>
        <taxon>Phasianinae</taxon>
        <taxon>Gallus</taxon>
    </lineage>
</organism>
<protein>
    <recommendedName>
        <fullName>Ras-related protein Rab-6A</fullName>
        <shortName>Rab-6</shortName>
        <ecNumber evidence="2">3.6.5.2</ecNumber>
    </recommendedName>
</protein>
<dbReference type="EC" id="3.6.5.2" evidence="2"/>
<dbReference type="EMBL" id="DQ470138">
    <property type="protein sequence ID" value="ABF00126.1"/>
    <property type="molecule type" value="mRNA"/>
</dbReference>
<dbReference type="RefSeq" id="NP_001038105.1">
    <property type="nucleotide sequence ID" value="NM_001044640.2"/>
</dbReference>
<dbReference type="SMR" id="Q1KME6"/>
<dbReference type="FunCoup" id="Q1KME6">
    <property type="interactions" value="2628"/>
</dbReference>
<dbReference type="STRING" id="9031.ENSGALP00000030639"/>
<dbReference type="PaxDb" id="9031-ENSGALP00000030639"/>
<dbReference type="GeneID" id="419063"/>
<dbReference type="KEGG" id="gga:419063"/>
<dbReference type="CTD" id="5870"/>
<dbReference type="VEuPathDB" id="HostDB:geneid_419063"/>
<dbReference type="eggNOG" id="KOG0094">
    <property type="taxonomic scope" value="Eukaryota"/>
</dbReference>
<dbReference type="HOGENOM" id="CLU_041217_10_2_1"/>
<dbReference type="InParanoid" id="Q1KME6"/>
<dbReference type="OrthoDB" id="63533at2759"/>
<dbReference type="PhylomeDB" id="Q1KME6"/>
<dbReference type="Reactome" id="R-GGA-6798695">
    <property type="pathway name" value="Neutrophil degranulation"/>
</dbReference>
<dbReference type="Reactome" id="R-GGA-6811436">
    <property type="pathway name" value="COPI-independent Golgi-to-ER retrograde traffic"/>
</dbReference>
<dbReference type="Reactome" id="R-GGA-6811440">
    <property type="pathway name" value="Retrograde transport at the Trans-Golgi-Network"/>
</dbReference>
<dbReference type="Reactome" id="R-GGA-8854214">
    <property type="pathway name" value="TBC/RABGAPs"/>
</dbReference>
<dbReference type="Reactome" id="R-GGA-8876198">
    <property type="pathway name" value="RAB GEFs exchange GTP for GDP on RABs"/>
</dbReference>
<dbReference type="PRO" id="PR:Q1KME6"/>
<dbReference type="Proteomes" id="UP000000539">
    <property type="component" value="Chromosome 1"/>
</dbReference>
<dbReference type="Bgee" id="ENSGALG00000017320">
    <property type="expression patterns" value="Expressed in brain and 13 other cell types or tissues"/>
</dbReference>
<dbReference type="GO" id="GO:0005829">
    <property type="term" value="C:cytosol"/>
    <property type="evidence" value="ECO:0007669"/>
    <property type="project" value="GOC"/>
</dbReference>
<dbReference type="GO" id="GO:0012505">
    <property type="term" value="C:endomembrane system"/>
    <property type="evidence" value="ECO:0000318"/>
    <property type="project" value="GO_Central"/>
</dbReference>
<dbReference type="GO" id="GO:0005794">
    <property type="term" value="C:Golgi apparatus"/>
    <property type="evidence" value="ECO:0000250"/>
    <property type="project" value="UniProtKB"/>
</dbReference>
<dbReference type="GO" id="GO:0000139">
    <property type="term" value="C:Golgi membrane"/>
    <property type="evidence" value="ECO:0000250"/>
    <property type="project" value="UniProtKB"/>
</dbReference>
<dbReference type="GO" id="GO:0005525">
    <property type="term" value="F:GTP binding"/>
    <property type="evidence" value="ECO:0007669"/>
    <property type="project" value="UniProtKB-KW"/>
</dbReference>
<dbReference type="GO" id="GO:0003924">
    <property type="term" value="F:GTPase activity"/>
    <property type="evidence" value="ECO:0000318"/>
    <property type="project" value="GO_Central"/>
</dbReference>
<dbReference type="GO" id="GO:0006891">
    <property type="term" value="P:intra-Golgi vesicle-mediated transport"/>
    <property type="evidence" value="ECO:0000318"/>
    <property type="project" value="GO_Central"/>
</dbReference>
<dbReference type="GO" id="GO:0006886">
    <property type="term" value="P:intracellular protein transport"/>
    <property type="evidence" value="ECO:0000318"/>
    <property type="project" value="GO_Central"/>
</dbReference>
<dbReference type="GO" id="GO:0034067">
    <property type="term" value="P:protein localization to Golgi apparatus"/>
    <property type="evidence" value="ECO:0000250"/>
    <property type="project" value="UniProtKB"/>
</dbReference>
<dbReference type="GO" id="GO:1903292">
    <property type="term" value="P:protein localization to Golgi membrane"/>
    <property type="evidence" value="ECO:0000318"/>
    <property type="project" value="GO_Central"/>
</dbReference>
<dbReference type="GO" id="GO:0042147">
    <property type="term" value="P:retrograde transport, endosome to Golgi"/>
    <property type="evidence" value="ECO:0000318"/>
    <property type="project" value="GO_Central"/>
</dbReference>
<dbReference type="GO" id="GO:0006890">
    <property type="term" value="P:retrograde vesicle-mediated transport, Golgi to endoplasmic reticulum"/>
    <property type="evidence" value="ECO:0000250"/>
    <property type="project" value="UniProtKB"/>
</dbReference>
<dbReference type="CDD" id="cd01861">
    <property type="entry name" value="Rab6"/>
    <property type="match status" value="1"/>
</dbReference>
<dbReference type="FunFam" id="3.40.50.300:FF:000139">
    <property type="entry name" value="ras-related protein Rab-6A isoform X1"/>
    <property type="match status" value="1"/>
</dbReference>
<dbReference type="Gene3D" id="3.40.50.300">
    <property type="entry name" value="P-loop containing nucleotide triphosphate hydrolases"/>
    <property type="match status" value="1"/>
</dbReference>
<dbReference type="InterPro" id="IPR027417">
    <property type="entry name" value="P-loop_NTPase"/>
</dbReference>
<dbReference type="InterPro" id="IPR050227">
    <property type="entry name" value="Rab"/>
</dbReference>
<dbReference type="InterPro" id="IPR005225">
    <property type="entry name" value="Small_GTP-bd"/>
</dbReference>
<dbReference type="InterPro" id="IPR001806">
    <property type="entry name" value="Small_GTPase"/>
</dbReference>
<dbReference type="NCBIfam" id="TIGR00231">
    <property type="entry name" value="small_GTP"/>
    <property type="match status" value="1"/>
</dbReference>
<dbReference type="PANTHER" id="PTHR47977">
    <property type="entry name" value="RAS-RELATED PROTEIN RAB"/>
    <property type="match status" value="1"/>
</dbReference>
<dbReference type="Pfam" id="PF00071">
    <property type="entry name" value="Ras"/>
    <property type="match status" value="1"/>
</dbReference>
<dbReference type="PRINTS" id="PR00449">
    <property type="entry name" value="RASTRNSFRMNG"/>
</dbReference>
<dbReference type="SMART" id="SM00175">
    <property type="entry name" value="RAB"/>
    <property type="match status" value="1"/>
</dbReference>
<dbReference type="SMART" id="SM00176">
    <property type="entry name" value="RAN"/>
    <property type="match status" value="1"/>
</dbReference>
<dbReference type="SMART" id="SM00173">
    <property type="entry name" value="RAS"/>
    <property type="match status" value="1"/>
</dbReference>
<dbReference type="SMART" id="SM00174">
    <property type="entry name" value="RHO"/>
    <property type="match status" value="1"/>
</dbReference>
<dbReference type="SUPFAM" id="SSF52540">
    <property type="entry name" value="P-loop containing nucleoside triphosphate hydrolases"/>
    <property type="match status" value="1"/>
</dbReference>
<dbReference type="PROSITE" id="PS51419">
    <property type="entry name" value="RAB"/>
    <property type="match status" value="1"/>
</dbReference>
<accession>Q1KME6</accession>